<proteinExistence type="inferred from homology"/>
<accession>Q20EY1</accession>
<sequence>MEVNILGLIATALFILIPTSFLIILYVKTEAVNDM</sequence>
<reference key="1">
    <citation type="journal article" date="2006" name="BMC Biol.">
        <title>The complete chloroplast DNA sequence of the green alga Oltmannsiellopsis viridis reveals a distinctive quadripartite architecture in the chloroplast genome of early diverging ulvophytes.</title>
        <authorList>
            <person name="Pombert J.-F."/>
            <person name="Lemieux C."/>
            <person name="Turmel M."/>
        </authorList>
    </citation>
    <scope>NUCLEOTIDE SEQUENCE [LARGE SCALE GENOMIC DNA]</scope>
</reference>
<protein>
    <recommendedName>
        <fullName evidence="1">Photosystem II reaction center protein M</fullName>
        <shortName evidence="1">PSII-M</shortName>
    </recommendedName>
</protein>
<keyword id="KW-0150">Chloroplast</keyword>
<keyword id="KW-0472">Membrane</keyword>
<keyword id="KW-0602">Photosynthesis</keyword>
<keyword id="KW-0604">Photosystem II</keyword>
<keyword id="KW-0934">Plastid</keyword>
<keyword id="KW-0674">Reaction center</keyword>
<keyword id="KW-0793">Thylakoid</keyword>
<keyword id="KW-0812">Transmembrane</keyword>
<keyword id="KW-1133">Transmembrane helix</keyword>
<dbReference type="EMBL" id="DQ291132">
    <property type="protein sequence ID" value="ABB81932.1"/>
    <property type="molecule type" value="Genomic_DNA"/>
</dbReference>
<dbReference type="RefSeq" id="YP_635864.1">
    <property type="nucleotide sequence ID" value="NC_008099.1"/>
</dbReference>
<dbReference type="SMR" id="Q20EY1"/>
<dbReference type="GeneID" id="4100111"/>
<dbReference type="GO" id="GO:0009535">
    <property type="term" value="C:chloroplast thylakoid membrane"/>
    <property type="evidence" value="ECO:0007669"/>
    <property type="project" value="UniProtKB-SubCell"/>
</dbReference>
<dbReference type="GO" id="GO:0009523">
    <property type="term" value="C:photosystem II"/>
    <property type="evidence" value="ECO:0007669"/>
    <property type="project" value="UniProtKB-KW"/>
</dbReference>
<dbReference type="GO" id="GO:0019684">
    <property type="term" value="P:photosynthesis, light reaction"/>
    <property type="evidence" value="ECO:0007669"/>
    <property type="project" value="InterPro"/>
</dbReference>
<dbReference type="HAMAP" id="MF_00438">
    <property type="entry name" value="PSII_PsbM"/>
    <property type="match status" value="1"/>
</dbReference>
<dbReference type="InterPro" id="IPR007826">
    <property type="entry name" value="PSII_PsbM"/>
</dbReference>
<dbReference type="InterPro" id="IPR037269">
    <property type="entry name" value="PSII_PsbM_sf"/>
</dbReference>
<dbReference type="NCBIfam" id="TIGR03038">
    <property type="entry name" value="PS_II_psbM"/>
    <property type="match status" value="1"/>
</dbReference>
<dbReference type="PANTHER" id="PTHR35774">
    <property type="entry name" value="PHOTOSYSTEM II REACTION CENTER PROTEIN M"/>
    <property type="match status" value="1"/>
</dbReference>
<dbReference type="PANTHER" id="PTHR35774:SF1">
    <property type="entry name" value="PHOTOSYSTEM II REACTION CENTER PROTEIN M"/>
    <property type="match status" value="1"/>
</dbReference>
<dbReference type="Pfam" id="PF05151">
    <property type="entry name" value="PsbM"/>
    <property type="match status" value="1"/>
</dbReference>
<dbReference type="SUPFAM" id="SSF161033">
    <property type="entry name" value="Photosystem II reaction center protein M, PsbM"/>
    <property type="match status" value="1"/>
</dbReference>
<evidence type="ECO:0000255" key="1">
    <source>
        <dbReference type="HAMAP-Rule" id="MF_00438"/>
    </source>
</evidence>
<organism>
    <name type="scientific">Oltmannsiellopsis viridis</name>
    <name type="common">Marine flagellate</name>
    <name type="synonym">Oltmannsiella viridis</name>
    <dbReference type="NCBI Taxonomy" id="51324"/>
    <lineage>
        <taxon>Eukaryota</taxon>
        <taxon>Viridiplantae</taxon>
        <taxon>Chlorophyta</taxon>
        <taxon>Ulvophyceae</taxon>
        <taxon>Oltmannsiellopsidales</taxon>
        <taxon>Oltmannsiellopsidaceae</taxon>
        <taxon>Oltmannsiellopsis</taxon>
    </lineage>
</organism>
<gene>
    <name evidence="1" type="primary">psbM</name>
</gene>
<comment type="function">
    <text evidence="1">One of the components of the core complex of photosystem II (PSII). PSII is a light-driven water:plastoquinone oxidoreductase that uses light energy to abstract electrons from H(2)O, generating O(2) and a proton gradient subsequently used for ATP formation. It consists of a core antenna complex that captures photons, and an electron transfer chain that converts photonic excitation into a charge separation. This subunit is found at the monomer-monomer interface.</text>
</comment>
<comment type="subunit">
    <text evidence="1">PSII is composed of 1 copy each of membrane proteins PsbA, PsbB, PsbC, PsbD, PsbE, PsbF, PsbH, PsbI, PsbJ, PsbK, PsbL, PsbM, PsbT, PsbX, PsbY, PsbZ, Psb30/Ycf12, at least 3 peripheral proteins of the oxygen-evolving complex and a large number of cofactors. It forms dimeric complexes.</text>
</comment>
<comment type="subcellular location">
    <subcellularLocation>
        <location evidence="1">Plastid</location>
        <location evidence="1">Chloroplast thylakoid membrane</location>
        <topology evidence="1">Single-pass membrane protein</topology>
    </subcellularLocation>
</comment>
<comment type="similarity">
    <text evidence="1">Belongs to the PsbM family.</text>
</comment>
<geneLocation type="chloroplast"/>
<name>PSBM_OLTVI</name>
<feature type="chain" id="PRO_0000276248" description="Photosystem II reaction center protein M">
    <location>
        <begin position="1"/>
        <end position="35"/>
    </location>
</feature>
<feature type="transmembrane region" description="Helical" evidence="1">
    <location>
        <begin position="5"/>
        <end position="25"/>
    </location>
</feature>